<feature type="chain" id="PRO_0000155368" description="Thymidylate kinase">
    <location>
        <begin position="1"/>
        <end position="210"/>
    </location>
</feature>
<feature type="binding site" evidence="1">
    <location>
        <begin position="9"/>
        <end position="16"/>
    </location>
    <ligand>
        <name>ATP</name>
        <dbReference type="ChEBI" id="CHEBI:30616"/>
    </ligand>
</feature>
<proteinExistence type="inferred from homology"/>
<organism>
    <name type="scientific">Aliivibrio fischeri (strain ATCC 700601 / ES114)</name>
    <name type="common">Vibrio fischeri</name>
    <dbReference type="NCBI Taxonomy" id="312309"/>
    <lineage>
        <taxon>Bacteria</taxon>
        <taxon>Pseudomonadati</taxon>
        <taxon>Pseudomonadota</taxon>
        <taxon>Gammaproteobacteria</taxon>
        <taxon>Vibrionales</taxon>
        <taxon>Vibrionaceae</taxon>
        <taxon>Aliivibrio</taxon>
    </lineage>
</organism>
<protein>
    <recommendedName>
        <fullName evidence="1">Thymidylate kinase</fullName>
        <ecNumber evidence="1">2.7.4.9</ecNumber>
    </recommendedName>
    <alternativeName>
        <fullName evidence="1">dTMP kinase</fullName>
    </alternativeName>
</protein>
<keyword id="KW-0067">ATP-binding</keyword>
<keyword id="KW-0418">Kinase</keyword>
<keyword id="KW-0545">Nucleotide biosynthesis</keyword>
<keyword id="KW-0547">Nucleotide-binding</keyword>
<keyword id="KW-1185">Reference proteome</keyword>
<keyword id="KW-0808">Transferase</keyword>
<dbReference type="EC" id="2.7.4.9" evidence="1"/>
<dbReference type="EMBL" id="CP000020">
    <property type="protein sequence ID" value="AAW86230.1"/>
    <property type="molecule type" value="Genomic_DNA"/>
</dbReference>
<dbReference type="RefSeq" id="WP_011262285.1">
    <property type="nucleotide sequence ID" value="NZ_CAWLES010000001.1"/>
</dbReference>
<dbReference type="RefSeq" id="YP_205118.1">
    <property type="nucleotide sequence ID" value="NC_006840.2"/>
</dbReference>
<dbReference type="SMR" id="Q5E416"/>
<dbReference type="STRING" id="312309.VF_1735"/>
<dbReference type="EnsemblBacteria" id="AAW86230">
    <property type="protein sequence ID" value="AAW86230"/>
    <property type="gene ID" value="VF_1735"/>
</dbReference>
<dbReference type="GeneID" id="54164434"/>
<dbReference type="KEGG" id="vfi:VF_1735"/>
<dbReference type="PATRIC" id="fig|312309.11.peg.1761"/>
<dbReference type="eggNOG" id="COG0125">
    <property type="taxonomic scope" value="Bacteria"/>
</dbReference>
<dbReference type="HOGENOM" id="CLU_049131_0_1_6"/>
<dbReference type="OrthoDB" id="9774907at2"/>
<dbReference type="Proteomes" id="UP000000537">
    <property type="component" value="Chromosome I"/>
</dbReference>
<dbReference type="GO" id="GO:0005829">
    <property type="term" value="C:cytosol"/>
    <property type="evidence" value="ECO:0007669"/>
    <property type="project" value="TreeGrafter"/>
</dbReference>
<dbReference type="GO" id="GO:0005524">
    <property type="term" value="F:ATP binding"/>
    <property type="evidence" value="ECO:0007669"/>
    <property type="project" value="UniProtKB-UniRule"/>
</dbReference>
<dbReference type="GO" id="GO:0004798">
    <property type="term" value="F:dTMP kinase activity"/>
    <property type="evidence" value="ECO:0007669"/>
    <property type="project" value="UniProtKB-UniRule"/>
</dbReference>
<dbReference type="GO" id="GO:0006233">
    <property type="term" value="P:dTDP biosynthetic process"/>
    <property type="evidence" value="ECO:0007669"/>
    <property type="project" value="InterPro"/>
</dbReference>
<dbReference type="GO" id="GO:0006235">
    <property type="term" value="P:dTTP biosynthetic process"/>
    <property type="evidence" value="ECO:0007669"/>
    <property type="project" value="UniProtKB-UniRule"/>
</dbReference>
<dbReference type="GO" id="GO:0006227">
    <property type="term" value="P:dUDP biosynthetic process"/>
    <property type="evidence" value="ECO:0007669"/>
    <property type="project" value="TreeGrafter"/>
</dbReference>
<dbReference type="CDD" id="cd01672">
    <property type="entry name" value="TMPK"/>
    <property type="match status" value="1"/>
</dbReference>
<dbReference type="FunFam" id="3.40.50.300:FF:000321">
    <property type="entry name" value="Thymidylate kinase"/>
    <property type="match status" value="1"/>
</dbReference>
<dbReference type="Gene3D" id="3.40.50.300">
    <property type="entry name" value="P-loop containing nucleotide triphosphate hydrolases"/>
    <property type="match status" value="1"/>
</dbReference>
<dbReference type="HAMAP" id="MF_00165">
    <property type="entry name" value="Thymidylate_kinase"/>
    <property type="match status" value="1"/>
</dbReference>
<dbReference type="InterPro" id="IPR027417">
    <property type="entry name" value="P-loop_NTPase"/>
</dbReference>
<dbReference type="InterPro" id="IPR039430">
    <property type="entry name" value="Thymidylate_kin-like_dom"/>
</dbReference>
<dbReference type="InterPro" id="IPR018095">
    <property type="entry name" value="Thymidylate_kin_CS"/>
</dbReference>
<dbReference type="InterPro" id="IPR018094">
    <property type="entry name" value="Thymidylate_kinase"/>
</dbReference>
<dbReference type="NCBIfam" id="TIGR00041">
    <property type="entry name" value="DTMP_kinase"/>
    <property type="match status" value="1"/>
</dbReference>
<dbReference type="PANTHER" id="PTHR10344">
    <property type="entry name" value="THYMIDYLATE KINASE"/>
    <property type="match status" value="1"/>
</dbReference>
<dbReference type="PANTHER" id="PTHR10344:SF4">
    <property type="entry name" value="UMP-CMP KINASE 2, MITOCHONDRIAL"/>
    <property type="match status" value="1"/>
</dbReference>
<dbReference type="Pfam" id="PF02223">
    <property type="entry name" value="Thymidylate_kin"/>
    <property type="match status" value="1"/>
</dbReference>
<dbReference type="SUPFAM" id="SSF52540">
    <property type="entry name" value="P-loop containing nucleoside triphosphate hydrolases"/>
    <property type="match status" value="1"/>
</dbReference>
<dbReference type="PROSITE" id="PS01331">
    <property type="entry name" value="THYMIDYLATE_KINASE"/>
    <property type="match status" value="1"/>
</dbReference>
<reference key="1">
    <citation type="journal article" date="2005" name="Proc. Natl. Acad. Sci. U.S.A.">
        <title>Complete genome sequence of Vibrio fischeri: a symbiotic bacterium with pathogenic congeners.</title>
        <authorList>
            <person name="Ruby E.G."/>
            <person name="Urbanowski M."/>
            <person name="Campbell J."/>
            <person name="Dunn A."/>
            <person name="Faini M."/>
            <person name="Gunsalus R."/>
            <person name="Lostroh P."/>
            <person name="Lupp C."/>
            <person name="McCann J."/>
            <person name="Millikan D."/>
            <person name="Schaefer A."/>
            <person name="Stabb E."/>
            <person name="Stevens A."/>
            <person name="Visick K."/>
            <person name="Whistler C."/>
            <person name="Greenberg E.P."/>
        </authorList>
    </citation>
    <scope>NUCLEOTIDE SEQUENCE [LARGE SCALE GENOMIC DNA]</scope>
    <source>
        <strain>ATCC 700601 / ES114</strain>
    </source>
</reference>
<evidence type="ECO:0000255" key="1">
    <source>
        <dbReference type="HAMAP-Rule" id="MF_00165"/>
    </source>
</evidence>
<sequence>MSKFIVIEGLEGAGKSTAIKNVLATLAKHGITSPVTTREPGGTPLAEKMRELVKQGHPDEPLTDMAELLLLYAARAQLVGNVIKPALARGEWVVGDRHDLSSQAYQGGGRGFDRELMMTMRNTVLGDFKPDLTIYMDIDPKLGLQRASARGELDRIEQMKLDFFERSRERYLEFANSDESIITIDAGQDLETVTNSIITALEAWLVKNGN</sequence>
<name>KTHY_ALIF1</name>
<comment type="function">
    <text evidence="1">Phosphorylation of dTMP to form dTDP in both de novo and salvage pathways of dTTP synthesis.</text>
</comment>
<comment type="catalytic activity">
    <reaction evidence="1">
        <text>dTMP + ATP = dTDP + ADP</text>
        <dbReference type="Rhea" id="RHEA:13517"/>
        <dbReference type="ChEBI" id="CHEBI:30616"/>
        <dbReference type="ChEBI" id="CHEBI:58369"/>
        <dbReference type="ChEBI" id="CHEBI:63528"/>
        <dbReference type="ChEBI" id="CHEBI:456216"/>
        <dbReference type="EC" id="2.7.4.9"/>
    </reaction>
</comment>
<comment type="similarity">
    <text evidence="1">Belongs to the thymidylate kinase family.</text>
</comment>
<gene>
    <name evidence="1" type="primary">tmk</name>
    <name type="ordered locus">VF_1735</name>
</gene>
<accession>Q5E416</accession>